<keyword id="KW-0963">Cytoplasm</keyword>
<keyword id="KW-1185">Reference proteome</keyword>
<keyword id="KW-0690">Ribosome biogenesis</keyword>
<keyword id="KW-0694">RNA-binding</keyword>
<keyword id="KW-0699">rRNA-binding</keyword>
<gene>
    <name evidence="1" type="primary">darP</name>
    <name type="ordered locus">Ecok1_42850</name>
    <name type="ORF">APECO1_2158</name>
</gene>
<sequence>MTKQPEDWLDDVPGDDIEDEDDEIIWVSKSEIKRDAEELKRLGAEIVDLGKNALDKIPLDADLRAAIELAQRIKMEGRRRQLQLIGKMLRQRDVEPIRQALDKLKNRHNQQVVLFHKLENLRDRLIDQGDDAIAEVLNLWPDADRQQLRTLIRNAKKEKEGNKPPKSARQIFQYLRELAENEG</sequence>
<dbReference type="EMBL" id="CP000468">
    <property type="protein sequence ID" value="ABJ03779.1"/>
    <property type="molecule type" value="Genomic_DNA"/>
</dbReference>
<dbReference type="SMR" id="A1AJD9"/>
<dbReference type="KEGG" id="ecv:APECO1_2158"/>
<dbReference type="HOGENOM" id="CLU_106757_2_0_6"/>
<dbReference type="Proteomes" id="UP000008216">
    <property type="component" value="Chromosome"/>
</dbReference>
<dbReference type="GO" id="GO:0005829">
    <property type="term" value="C:cytosol"/>
    <property type="evidence" value="ECO:0007669"/>
    <property type="project" value="TreeGrafter"/>
</dbReference>
<dbReference type="GO" id="GO:0043022">
    <property type="term" value="F:ribosome binding"/>
    <property type="evidence" value="ECO:0007669"/>
    <property type="project" value="UniProtKB-UniRule"/>
</dbReference>
<dbReference type="GO" id="GO:0019843">
    <property type="term" value="F:rRNA binding"/>
    <property type="evidence" value="ECO:0007669"/>
    <property type="project" value="UniProtKB-UniRule"/>
</dbReference>
<dbReference type="GO" id="GO:1902626">
    <property type="term" value="P:assembly of large subunit precursor of preribosome"/>
    <property type="evidence" value="ECO:0007669"/>
    <property type="project" value="UniProtKB-UniRule"/>
</dbReference>
<dbReference type="CDD" id="cd16331">
    <property type="entry name" value="YjgA-like"/>
    <property type="match status" value="1"/>
</dbReference>
<dbReference type="FunFam" id="1.10.60.30:FF:000001">
    <property type="entry name" value="UPF0307 protein YjgA"/>
    <property type="match status" value="1"/>
</dbReference>
<dbReference type="FunFam" id="1.10.60.30:FF:000002">
    <property type="entry name" value="UPF0307 protein YjgA"/>
    <property type="match status" value="1"/>
</dbReference>
<dbReference type="Gene3D" id="1.10.60.30">
    <property type="entry name" value="PSPTO4464-like domains"/>
    <property type="match status" value="2"/>
</dbReference>
<dbReference type="HAMAP" id="MF_00765">
    <property type="entry name" value="DarP"/>
    <property type="match status" value="1"/>
</dbReference>
<dbReference type="InterPro" id="IPR006839">
    <property type="entry name" value="DarP"/>
</dbReference>
<dbReference type="InterPro" id="IPR023153">
    <property type="entry name" value="DarP_sf"/>
</dbReference>
<dbReference type="NCBIfam" id="NF003593">
    <property type="entry name" value="PRK05255.1-1"/>
    <property type="match status" value="1"/>
</dbReference>
<dbReference type="PANTHER" id="PTHR38101">
    <property type="entry name" value="UPF0307 PROTEIN YJGA"/>
    <property type="match status" value="1"/>
</dbReference>
<dbReference type="PANTHER" id="PTHR38101:SF1">
    <property type="entry name" value="UPF0307 PROTEIN YJGA"/>
    <property type="match status" value="1"/>
</dbReference>
<dbReference type="Pfam" id="PF04751">
    <property type="entry name" value="DarP"/>
    <property type="match status" value="1"/>
</dbReference>
<dbReference type="PIRSF" id="PIRSF016183">
    <property type="entry name" value="UCP016183"/>
    <property type="match status" value="1"/>
</dbReference>
<dbReference type="SUPFAM" id="SSF158710">
    <property type="entry name" value="PSPTO4464-like"/>
    <property type="match status" value="1"/>
</dbReference>
<feature type="chain" id="PRO_1000046796" description="Dual-action ribosomal maturation protein DarP">
    <location>
        <begin position="1"/>
        <end position="183"/>
    </location>
</feature>
<proteinExistence type="inferred from homology"/>
<name>DARP_ECOK1</name>
<protein>
    <recommendedName>
        <fullName evidence="1">Dual-action ribosomal maturation protein DarP</fullName>
    </recommendedName>
    <alternativeName>
        <fullName evidence="1">Large ribosomal subunit assembly factor DarP</fullName>
    </alternativeName>
</protein>
<reference key="1">
    <citation type="journal article" date="2007" name="J. Bacteriol.">
        <title>The genome sequence of avian pathogenic Escherichia coli strain O1:K1:H7 shares strong similarities with human extraintestinal pathogenic E. coli genomes.</title>
        <authorList>
            <person name="Johnson T.J."/>
            <person name="Kariyawasam S."/>
            <person name="Wannemuehler Y."/>
            <person name="Mangiamele P."/>
            <person name="Johnson S.J."/>
            <person name="Doetkott C."/>
            <person name="Skyberg J.A."/>
            <person name="Lynne A.M."/>
            <person name="Johnson J.R."/>
            <person name="Nolan L.K."/>
        </authorList>
    </citation>
    <scope>NUCLEOTIDE SEQUENCE [LARGE SCALE GENOMIC DNA]</scope>
</reference>
<organism>
    <name type="scientific">Escherichia coli O1:K1 / APEC</name>
    <dbReference type="NCBI Taxonomy" id="405955"/>
    <lineage>
        <taxon>Bacteria</taxon>
        <taxon>Pseudomonadati</taxon>
        <taxon>Pseudomonadota</taxon>
        <taxon>Gammaproteobacteria</taxon>
        <taxon>Enterobacterales</taxon>
        <taxon>Enterobacteriaceae</taxon>
        <taxon>Escherichia</taxon>
    </lineage>
</organism>
<comment type="function">
    <text evidence="1">Member of a network of 50S ribosomal subunit biogenesis factors which assembles along the 30S-50S interface, preventing incorrect 23S rRNA structures from forming. Promotes peptidyl transferase center (PTC) maturation.</text>
</comment>
<comment type="subcellular location">
    <subcellularLocation>
        <location evidence="1">Cytoplasm</location>
    </subcellularLocation>
    <text evidence="1">Associates with late stage pre-50S ribosomal subunits.</text>
</comment>
<comment type="similarity">
    <text evidence="1">Belongs to the DarP family.</text>
</comment>
<accession>A1AJD9</accession>
<evidence type="ECO:0000255" key="1">
    <source>
        <dbReference type="HAMAP-Rule" id="MF_00765"/>
    </source>
</evidence>